<proteinExistence type="inferred from homology"/>
<dbReference type="EMBL" id="AB000631">
    <property type="protein sequence ID" value="BAA21507.1"/>
    <property type="molecule type" value="Genomic_DNA"/>
</dbReference>
<dbReference type="EMBL" id="AE014133">
    <property type="protein sequence ID" value="AAN58538.1"/>
    <property type="molecule type" value="Genomic_DNA"/>
</dbReference>
<dbReference type="RefSeq" id="NP_721232.1">
    <property type="nucleotide sequence ID" value="NC_004350.2"/>
</dbReference>
<dbReference type="RefSeq" id="WP_002261972.1">
    <property type="nucleotide sequence ID" value="NC_004350.2"/>
</dbReference>
<dbReference type="SMR" id="O33662"/>
<dbReference type="STRING" id="210007.SMU_822"/>
<dbReference type="GeneID" id="93859647"/>
<dbReference type="KEGG" id="smu:SMU_822"/>
<dbReference type="PATRIC" id="fig|210007.7.peg.729"/>
<dbReference type="eggNOG" id="COG0568">
    <property type="taxonomic scope" value="Bacteria"/>
</dbReference>
<dbReference type="HOGENOM" id="CLU_014793_3_3_9"/>
<dbReference type="OrthoDB" id="9809557at2"/>
<dbReference type="PhylomeDB" id="O33662"/>
<dbReference type="Proteomes" id="UP000002512">
    <property type="component" value="Chromosome"/>
</dbReference>
<dbReference type="GO" id="GO:0005737">
    <property type="term" value="C:cytoplasm"/>
    <property type="evidence" value="ECO:0007669"/>
    <property type="project" value="UniProtKB-SubCell"/>
</dbReference>
<dbReference type="GO" id="GO:0003677">
    <property type="term" value="F:DNA binding"/>
    <property type="evidence" value="ECO:0007669"/>
    <property type="project" value="UniProtKB-UniRule"/>
</dbReference>
<dbReference type="GO" id="GO:0016987">
    <property type="term" value="F:sigma factor activity"/>
    <property type="evidence" value="ECO:0007669"/>
    <property type="project" value="UniProtKB-UniRule"/>
</dbReference>
<dbReference type="GO" id="GO:0006352">
    <property type="term" value="P:DNA-templated transcription initiation"/>
    <property type="evidence" value="ECO:0007669"/>
    <property type="project" value="UniProtKB-UniRule"/>
</dbReference>
<dbReference type="CDD" id="cd06171">
    <property type="entry name" value="Sigma70_r4"/>
    <property type="match status" value="1"/>
</dbReference>
<dbReference type="FunFam" id="1.10.10.10:FF:000002">
    <property type="entry name" value="RNA polymerase sigma factor SigA"/>
    <property type="match status" value="1"/>
</dbReference>
<dbReference type="FunFam" id="1.10.10.10:FF:000004">
    <property type="entry name" value="RNA polymerase sigma factor SigA"/>
    <property type="match status" value="1"/>
</dbReference>
<dbReference type="FunFam" id="1.10.601.10:FF:000001">
    <property type="entry name" value="RNA polymerase sigma factor SigA"/>
    <property type="match status" value="1"/>
</dbReference>
<dbReference type="Gene3D" id="1.10.601.10">
    <property type="entry name" value="RNA Polymerase Primary Sigma Factor"/>
    <property type="match status" value="2"/>
</dbReference>
<dbReference type="Gene3D" id="1.10.220.120">
    <property type="entry name" value="Sigma-70 factor, region 1.1"/>
    <property type="match status" value="1"/>
</dbReference>
<dbReference type="Gene3D" id="1.10.10.10">
    <property type="entry name" value="Winged helix-like DNA-binding domain superfamily/Winged helix DNA-binding domain"/>
    <property type="match status" value="2"/>
</dbReference>
<dbReference type="HAMAP" id="MF_00963">
    <property type="entry name" value="Sigma70_RpoD_SigA"/>
    <property type="match status" value="1"/>
</dbReference>
<dbReference type="InterPro" id="IPR014284">
    <property type="entry name" value="RNA_pol_sigma-70_dom"/>
</dbReference>
<dbReference type="InterPro" id="IPR000943">
    <property type="entry name" value="RNA_pol_sigma70"/>
</dbReference>
<dbReference type="InterPro" id="IPR009042">
    <property type="entry name" value="RNA_pol_sigma70_r1_2"/>
</dbReference>
<dbReference type="InterPro" id="IPR007627">
    <property type="entry name" value="RNA_pol_sigma70_r2"/>
</dbReference>
<dbReference type="InterPro" id="IPR007624">
    <property type="entry name" value="RNA_pol_sigma70_r3"/>
</dbReference>
<dbReference type="InterPro" id="IPR007630">
    <property type="entry name" value="RNA_pol_sigma70_r4"/>
</dbReference>
<dbReference type="InterPro" id="IPR007127">
    <property type="entry name" value="RNA_pol_sigma_70_r1_1"/>
</dbReference>
<dbReference type="InterPro" id="IPR042189">
    <property type="entry name" value="RNA_pol_sigma_70_r1_1_sf"/>
</dbReference>
<dbReference type="InterPro" id="IPR013325">
    <property type="entry name" value="RNA_pol_sigma_r2"/>
</dbReference>
<dbReference type="InterPro" id="IPR013324">
    <property type="entry name" value="RNA_pol_sigma_r3/r4-like"/>
</dbReference>
<dbReference type="InterPro" id="IPR012760">
    <property type="entry name" value="RNA_pol_sigma_RpoD_C"/>
</dbReference>
<dbReference type="InterPro" id="IPR050239">
    <property type="entry name" value="Sigma-70_RNA_pol_init_factors"/>
</dbReference>
<dbReference type="InterPro" id="IPR028630">
    <property type="entry name" value="Sigma70_RpoD"/>
</dbReference>
<dbReference type="InterPro" id="IPR036388">
    <property type="entry name" value="WH-like_DNA-bd_sf"/>
</dbReference>
<dbReference type="NCBIfam" id="NF006666">
    <property type="entry name" value="PRK09210.1"/>
    <property type="match status" value="1"/>
</dbReference>
<dbReference type="NCBIfam" id="TIGR02393">
    <property type="entry name" value="RpoD_Cterm"/>
    <property type="match status" value="1"/>
</dbReference>
<dbReference type="NCBIfam" id="TIGR02937">
    <property type="entry name" value="sigma70-ECF"/>
    <property type="match status" value="1"/>
</dbReference>
<dbReference type="PANTHER" id="PTHR30603">
    <property type="entry name" value="RNA POLYMERASE SIGMA FACTOR RPO"/>
    <property type="match status" value="1"/>
</dbReference>
<dbReference type="PANTHER" id="PTHR30603:SF60">
    <property type="entry name" value="RNA POLYMERASE SIGMA FACTOR RPOD"/>
    <property type="match status" value="1"/>
</dbReference>
<dbReference type="Pfam" id="PF03979">
    <property type="entry name" value="Sigma70_r1_1"/>
    <property type="match status" value="1"/>
</dbReference>
<dbReference type="Pfam" id="PF00140">
    <property type="entry name" value="Sigma70_r1_2"/>
    <property type="match status" value="1"/>
</dbReference>
<dbReference type="Pfam" id="PF04542">
    <property type="entry name" value="Sigma70_r2"/>
    <property type="match status" value="1"/>
</dbReference>
<dbReference type="Pfam" id="PF04539">
    <property type="entry name" value="Sigma70_r3"/>
    <property type="match status" value="1"/>
</dbReference>
<dbReference type="Pfam" id="PF04545">
    <property type="entry name" value="Sigma70_r4"/>
    <property type="match status" value="1"/>
</dbReference>
<dbReference type="PRINTS" id="PR00046">
    <property type="entry name" value="SIGMA70FCT"/>
</dbReference>
<dbReference type="SUPFAM" id="SSF88946">
    <property type="entry name" value="Sigma2 domain of RNA polymerase sigma factors"/>
    <property type="match status" value="1"/>
</dbReference>
<dbReference type="SUPFAM" id="SSF88659">
    <property type="entry name" value="Sigma3 and sigma4 domains of RNA polymerase sigma factors"/>
    <property type="match status" value="2"/>
</dbReference>
<dbReference type="PROSITE" id="PS00715">
    <property type="entry name" value="SIGMA70_1"/>
    <property type="match status" value="1"/>
</dbReference>
<dbReference type="PROSITE" id="PS00716">
    <property type="entry name" value="SIGMA70_2"/>
    <property type="match status" value="1"/>
</dbReference>
<keyword id="KW-0963">Cytoplasm</keyword>
<keyword id="KW-0238">DNA-binding</keyword>
<keyword id="KW-1185">Reference proteome</keyword>
<keyword id="KW-0731">Sigma factor</keyword>
<keyword id="KW-0804">Transcription</keyword>
<keyword id="KW-0805">Transcription regulation</keyword>
<reference key="1">
    <citation type="journal article" date="1997" name="J. Bacteriol.">
        <title>Identification of a fourth gene involved in dTDP-rhamnose synthesis in Streptococcus mutans.</title>
        <authorList>
            <person name="Tsukioka Y."/>
            <person name="Yamashita Y."/>
            <person name="Nakano Y."/>
            <person name="Oho T."/>
            <person name="Koga T."/>
        </authorList>
    </citation>
    <scope>NUCLEOTIDE SEQUENCE [GENOMIC DNA]</scope>
</reference>
<reference key="2">
    <citation type="journal article" date="2002" name="Proc. Natl. Acad. Sci. U.S.A.">
        <title>Genome sequence of Streptococcus mutans UA159, a cariogenic dental pathogen.</title>
        <authorList>
            <person name="Ajdic D.J."/>
            <person name="McShan W.M."/>
            <person name="McLaughlin R.E."/>
            <person name="Savic G."/>
            <person name="Chang J."/>
            <person name="Carson M.B."/>
            <person name="Primeaux C."/>
            <person name="Tian R."/>
            <person name="Kenton S."/>
            <person name="Jia H.G."/>
            <person name="Lin S.P."/>
            <person name="Qian Y."/>
            <person name="Li S."/>
            <person name="Zhu H."/>
            <person name="Najar F.Z."/>
            <person name="Lai H."/>
            <person name="White J."/>
            <person name="Roe B.A."/>
            <person name="Ferretti J.J."/>
        </authorList>
    </citation>
    <scope>NUCLEOTIDE SEQUENCE [LARGE SCALE GENOMIC DNA]</scope>
    <source>
        <strain>ATCC 700610 / UA159</strain>
    </source>
</reference>
<protein>
    <recommendedName>
        <fullName evidence="1">RNA polymerase sigma factor SigA</fullName>
    </recommendedName>
    <alternativeName>
        <fullName>Sigma-42</fullName>
    </alternativeName>
</protein>
<accession>O33662</accession>
<feature type="chain" id="PRO_0000093924" description="RNA polymerase sigma factor SigA">
    <location>
        <begin position="1"/>
        <end position="371"/>
    </location>
</feature>
<feature type="DNA-binding region" description="H-T-H motif" evidence="1">
    <location>
        <begin position="331"/>
        <end position="350"/>
    </location>
</feature>
<feature type="region of interest" description="Sigma-70 factor domain-2" evidence="1">
    <location>
        <begin position="137"/>
        <end position="207"/>
    </location>
</feature>
<feature type="region of interest" description="Sigma-70 factor domain-3" evidence="1">
    <location>
        <begin position="216"/>
        <end position="292"/>
    </location>
</feature>
<feature type="region of interest" description="Sigma-70 factor domain-4" evidence="1">
    <location>
        <begin position="305"/>
        <end position="358"/>
    </location>
</feature>
<feature type="short sequence motif" description="Interaction with polymerase core subunit RpoC">
    <location>
        <begin position="161"/>
        <end position="164"/>
    </location>
</feature>
<organism>
    <name type="scientific">Streptococcus mutans serotype c (strain ATCC 700610 / UA159)</name>
    <dbReference type="NCBI Taxonomy" id="210007"/>
    <lineage>
        <taxon>Bacteria</taxon>
        <taxon>Bacillati</taxon>
        <taxon>Bacillota</taxon>
        <taxon>Bacilli</taxon>
        <taxon>Lactobacillales</taxon>
        <taxon>Streptococcaceae</taxon>
        <taxon>Streptococcus</taxon>
    </lineage>
</organism>
<evidence type="ECO:0000255" key="1">
    <source>
        <dbReference type="HAMAP-Rule" id="MF_00963"/>
    </source>
</evidence>
<gene>
    <name evidence="1" type="primary">sigA</name>
    <name type="synonym">rpoD</name>
    <name type="ordered locus">SMU_822</name>
</gene>
<sequence>MVNNKKKTSSTFNVQVADFIRNHKKEGVAVDDEVTEKLVIPFELEAEQIDDLLERLTDGGISITDREGNPSTKYAVEEIKPEELTDEELLGSNSAKVNDPVRMYLKEIGVVPLLTNEEEKELAIAVENGDLEAKQRLAEANLRLVVSIAKRYVGRGMQFLDLIQEGNMGLMKAVDKFDYSKGFKFSTYATWWIRQAITRAIADQARTIRIPVHMVETINKLVREQRNLLQELGQDPTPEQIAERMDMTPDKVREILKIAQEPVSLETPIGEEDDSHLGDFIEDEVIENPVDYTTRVVLREQLDEVLDTLTDREENVLRLRFGLDDGKMRTLEDVGKVFDVTRERIRQIEAKALRKLRHPSRSKQLRDFVED</sequence>
<name>SIGA_STRMU</name>
<comment type="function">
    <text evidence="1">Sigma factors are initiation factors that promote the attachment of RNA polymerase to specific initiation sites and are then released. This sigma factor is the primary sigma factor during exponential growth.</text>
</comment>
<comment type="subunit">
    <text evidence="1">Interacts transiently with the RNA polymerase catalytic core.</text>
</comment>
<comment type="subcellular location">
    <subcellularLocation>
        <location evidence="1">Cytoplasm</location>
    </subcellularLocation>
</comment>
<comment type="similarity">
    <text evidence="1">Belongs to the sigma-70 factor family. RpoD/SigA subfamily.</text>
</comment>